<organism>
    <name type="scientific">Arabidopsis thaliana</name>
    <name type="common">Mouse-ear cress</name>
    <dbReference type="NCBI Taxonomy" id="3702"/>
    <lineage>
        <taxon>Eukaryota</taxon>
        <taxon>Viridiplantae</taxon>
        <taxon>Streptophyta</taxon>
        <taxon>Embryophyta</taxon>
        <taxon>Tracheophyta</taxon>
        <taxon>Spermatophyta</taxon>
        <taxon>Magnoliopsida</taxon>
        <taxon>eudicotyledons</taxon>
        <taxon>Gunneridae</taxon>
        <taxon>Pentapetalae</taxon>
        <taxon>rosids</taxon>
        <taxon>malvids</taxon>
        <taxon>Brassicales</taxon>
        <taxon>Brassicaceae</taxon>
        <taxon>Camelineae</taxon>
        <taxon>Arabidopsis</taxon>
    </lineage>
</organism>
<name>PIP_ARATH</name>
<accession>P93732</accession>
<accession>Q93Y05</accession>
<accession>Q9SKJ3</accession>
<proteinExistence type="evidence at transcript level"/>
<dbReference type="EC" id="3.4.11.5"/>
<dbReference type="EMBL" id="AC006304">
    <property type="protein sequence ID" value="AAD20113.1"/>
    <property type="molecule type" value="Genomic_DNA"/>
</dbReference>
<dbReference type="EMBL" id="CP002685">
    <property type="protein sequence ID" value="AEC06293.1"/>
    <property type="molecule type" value="Genomic_DNA"/>
</dbReference>
<dbReference type="EMBL" id="AY059916">
    <property type="protein sequence ID" value="AAL24398.1"/>
    <property type="molecule type" value="mRNA"/>
</dbReference>
<dbReference type="EMBL" id="AY114690">
    <property type="protein sequence ID" value="AAM48009.1"/>
    <property type="molecule type" value="mRNA"/>
</dbReference>
<dbReference type="EMBL" id="U72711">
    <property type="protein sequence ID" value="AAC49560.1"/>
    <property type="status" value="ALT_INIT"/>
    <property type="molecule type" value="mRNA"/>
</dbReference>
<dbReference type="PIR" id="E84515">
    <property type="entry name" value="E84515"/>
</dbReference>
<dbReference type="RefSeq" id="NP_001325175.1">
    <property type="nucleotide sequence ID" value="NM_001335417.1"/>
</dbReference>
<dbReference type="RefSeq" id="NP_179037.2">
    <molecule id="P93732-1"/>
    <property type="nucleotide sequence ID" value="NM_126994.4"/>
</dbReference>
<dbReference type="RefSeq" id="NP_973454.1">
    <property type="nucleotide sequence ID" value="NM_201725.3"/>
</dbReference>
<dbReference type="SMR" id="P93732"/>
<dbReference type="BioGRID" id="1273">
    <property type="interactions" value="1"/>
</dbReference>
<dbReference type="FunCoup" id="P93732">
    <property type="interactions" value="387"/>
</dbReference>
<dbReference type="STRING" id="3702.P93732"/>
<dbReference type="ESTHER" id="arath-pip">
    <property type="family name" value="Proline_iminopeptidase"/>
</dbReference>
<dbReference type="MEROPS" id="S33.001"/>
<dbReference type="iPTMnet" id="P93732"/>
<dbReference type="PaxDb" id="3702-AT2G14260.1"/>
<dbReference type="ProteomicsDB" id="234960">
    <molecule id="P93732-1"/>
</dbReference>
<dbReference type="EnsemblPlants" id="AT2G14260.1">
    <molecule id="P93732-1"/>
    <property type="protein sequence ID" value="AT2G14260.1"/>
    <property type="gene ID" value="AT2G14260"/>
</dbReference>
<dbReference type="GeneID" id="815913"/>
<dbReference type="Gramene" id="AT2G14260.1">
    <molecule id="P93732-1"/>
    <property type="protein sequence ID" value="AT2G14260.1"/>
    <property type="gene ID" value="AT2G14260"/>
</dbReference>
<dbReference type="KEGG" id="ath:AT2G14260"/>
<dbReference type="Araport" id="AT2G14260"/>
<dbReference type="TAIR" id="AT2G14260">
    <property type="gene designation" value="PIP"/>
</dbReference>
<dbReference type="eggNOG" id="ENOG502QPPY">
    <property type="taxonomic scope" value="Eukaryota"/>
</dbReference>
<dbReference type="InParanoid" id="P93732"/>
<dbReference type="PhylomeDB" id="P93732"/>
<dbReference type="PRO" id="PR:P93732"/>
<dbReference type="Proteomes" id="UP000006548">
    <property type="component" value="Chromosome 2"/>
</dbReference>
<dbReference type="ExpressionAtlas" id="P93732">
    <property type="expression patterns" value="baseline and differential"/>
</dbReference>
<dbReference type="GO" id="GO:0009507">
    <property type="term" value="C:chloroplast"/>
    <property type="evidence" value="ECO:0000314"/>
    <property type="project" value="TAIR"/>
</dbReference>
<dbReference type="GO" id="GO:0005829">
    <property type="term" value="C:cytosol"/>
    <property type="evidence" value="ECO:0000314"/>
    <property type="project" value="TAIR"/>
</dbReference>
<dbReference type="GO" id="GO:0005739">
    <property type="term" value="C:mitochondrion"/>
    <property type="evidence" value="ECO:0007005"/>
    <property type="project" value="TAIR"/>
</dbReference>
<dbReference type="GO" id="GO:0099503">
    <property type="term" value="C:secretory vesicle"/>
    <property type="evidence" value="ECO:0007005"/>
    <property type="project" value="TAIR"/>
</dbReference>
<dbReference type="GO" id="GO:0004177">
    <property type="term" value="F:aminopeptidase activity"/>
    <property type="evidence" value="ECO:0000314"/>
    <property type="project" value="TAIR"/>
</dbReference>
<dbReference type="GO" id="GO:0006508">
    <property type="term" value="P:proteolysis"/>
    <property type="evidence" value="ECO:0007669"/>
    <property type="project" value="UniProtKB-KW"/>
</dbReference>
<dbReference type="GO" id="GO:0010038">
    <property type="term" value="P:response to metal ion"/>
    <property type="evidence" value="ECO:0000270"/>
    <property type="project" value="TAIR"/>
</dbReference>
<dbReference type="GO" id="GO:1902074">
    <property type="term" value="P:response to salt"/>
    <property type="evidence" value="ECO:0000270"/>
    <property type="project" value="TAIR"/>
</dbReference>
<dbReference type="GO" id="GO:0009414">
    <property type="term" value="P:response to water deprivation"/>
    <property type="evidence" value="ECO:0000270"/>
    <property type="project" value="TAIR"/>
</dbReference>
<dbReference type="FunFam" id="3.40.50.1820:FF:000382">
    <property type="entry name" value="Proline iminopeptidase"/>
    <property type="match status" value="1"/>
</dbReference>
<dbReference type="Gene3D" id="3.40.50.1820">
    <property type="entry name" value="alpha/beta hydrolase"/>
    <property type="match status" value="1"/>
</dbReference>
<dbReference type="InterPro" id="IPR000073">
    <property type="entry name" value="AB_hydrolase_1"/>
</dbReference>
<dbReference type="InterPro" id="IPR029058">
    <property type="entry name" value="AB_hydrolase_fold"/>
</dbReference>
<dbReference type="InterPro" id="IPR002410">
    <property type="entry name" value="Peptidase_S33"/>
</dbReference>
<dbReference type="InterPro" id="IPR005944">
    <property type="entry name" value="Pro_iminopeptidase"/>
</dbReference>
<dbReference type="NCBIfam" id="TIGR01249">
    <property type="entry name" value="pro_imino_pep_1"/>
    <property type="match status" value="1"/>
</dbReference>
<dbReference type="PANTHER" id="PTHR43722">
    <property type="entry name" value="PROLINE IMINOPEPTIDASE"/>
    <property type="match status" value="1"/>
</dbReference>
<dbReference type="PANTHER" id="PTHR43722:SF1">
    <property type="entry name" value="PROLINE IMINOPEPTIDASE"/>
    <property type="match status" value="1"/>
</dbReference>
<dbReference type="Pfam" id="PF00561">
    <property type="entry name" value="Abhydrolase_1"/>
    <property type="match status" value="1"/>
</dbReference>
<dbReference type="PRINTS" id="PR00111">
    <property type="entry name" value="ABHYDROLASE"/>
</dbReference>
<dbReference type="PRINTS" id="PR00793">
    <property type="entry name" value="PROAMNOPTASE"/>
</dbReference>
<dbReference type="SUPFAM" id="SSF53474">
    <property type="entry name" value="alpha/beta-Hydrolases"/>
    <property type="match status" value="1"/>
</dbReference>
<protein>
    <recommendedName>
        <fullName>Proline iminopeptidase</fullName>
        <shortName>PIP</shortName>
        <ecNumber>3.4.11.5</ecNumber>
    </recommendedName>
    <alternativeName>
        <fullName>Prolyl aminopeptidase</fullName>
        <shortName>PAP</shortName>
    </alternativeName>
</protein>
<gene>
    <name type="primary">PIP</name>
    <name type="ordered locus">At2g14260</name>
    <name type="ORF">T1O16.15</name>
</gene>
<reference key="1">
    <citation type="journal article" date="1999" name="Nature">
        <title>Sequence and analysis of chromosome 2 of the plant Arabidopsis thaliana.</title>
        <authorList>
            <person name="Lin X."/>
            <person name="Kaul S."/>
            <person name="Rounsley S.D."/>
            <person name="Shea T.P."/>
            <person name="Benito M.-I."/>
            <person name="Town C.D."/>
            <person name="Fujii C.Y."/>
            <person name="Mason T.M."/>
            <person name="Bowman C.L."/>
            <person name="Barnstead M.E."/>
            <person name="Feldblyum T.V."/>
            <person name="Buell C.R."/>
            <person name="Ketchum K.A."/>
            <person name="Lee J.J."/>
            <person name="Ronning C.M."/>
            <person name="Koo H.L."/>
            <person name="Moffat K.S."/>
            <person name="Cronin L.A."/>
            <person name="Shen M."/>
            <person name="Pai G."/>
            <person name="Van Aken S."/>
            <person name="Umayam L."/>
            <person name="Tallon L.J."/>
            <person name="Gill J.E."/>
            <person name="Adams M.D."/>
            <person name="Carrera A.J."/>
            <person name="Creasy T.H."/>
            <person name="Goodman H.M."/>
            <person name="Somerville C.R."/>
            <person name="Copenhaver G.P."/>
            <person name="Preuss D."/>
            <person name="Nierman W.C."/>
            <person name="White O."/>
            <person name="Eisen J.A."/>
            <person name="Salzberg S.L."/>
            <person name="Fraser C.M."/>
            <person name="Venter J.C."/>
        </authorList>
    </citation>
    <scope>NUCLEOTIDE SEQUENCE [LARGE SCALE GENOMIC DNA]</scope>
    <source>
        <strain>cv. Columbia</strain>
    </source>
</reference>
<reference key="2">
    <citation type="journal article" date="2017" name="Plant J.">
        <title>Araport11: a complete reannotation of the Arabidopsis thaliana reference genome.</title>
        <authorList>
            <person name="Cheng C.Y."/>
            <person name="Krishnakumar V."/>
            <person name="Chan A.P."/>
            <person name="Thibaud-Nissen F."/>
            <person name="Schobel S."/>
            <person name="Town C.D."/>
        </authorList>
    </citation>
    <scope>GENOME REANNOTATION</scope>
    <source>
        <strain>cv. Columbia</strain>
    </source>
</reference>
<reference key="3">
    <citation type="journal article" date="2003" name="Science">
        <title>Empirical analysis of transcriptional activity in the Arabidopsis genome.</title>
        <authorList>
            <person name="Yamada K."/>
            <person name="Lim J."/>
            <person name="Dale J.M."/>
            <person name="Chen H."/>
            <person name="Shinn P."/>
            <person name="Palm C.J."/>
            <person name="Southwick A.M."/>
            <person name="Wu H.C."/>
            <person name="Kim C.J."/>
            <person name="Nguyen M."/>
            <person name="Pham P.K."/>
            <person name="Cheuk R.F."/>
            <person name="Karlin-Newmann G."/>
            <person name="Liu S.X."/>
            <person name="Lam B."/>
            <person name="Sakano H."/>
            <person name="Wu T."/>
            <person name="Yu G."/>
            <person name="Miranda M."/>
            <person name="Quach H.L."/>
            <person name="Tripp M."/>
            <person name="Chang C.H."/>
            <person name="Lee J.M."/>
            <person name="Toriumi M.J."/>
            <person name="Chan M.M."/>
            <person name="Tang C.C."/>
            <person name="Onodera C.S."/>
            <person name="Deng J.M."/>
            <person name="Akiyama K."/>
            <person name="Ansari Y."/>
            <person name="Arakawa T."/>
            <person name="Banh J."/>
            <person name="Banno F."/>
            <person name="Bowser L."/>
            <person name="Brooks S.Y."/>
            <person name="Carninci P."/>
            <person name="Chao Q."/>
            <person name="Choy N."/>
            <person name="Enju A."/>
            <person name="Goldsmith A.D."/>
            <person name="Gurjal M."/>
            <person name="Hansen N.F."/>
            <person name="Hayashizaki Y."/>
            <person name="Johnson-Hopson C."/>
            <person name="Hsuan V.W."/>
            <person name="Iida K."/>
            <person name="Karnes M."/>
            <person name="Khan S."/>
            <person name="Koesema E."/>
            <person name="Ishida J."/>
            <person name="Jiang P.X."/>
            <person name="Jones T."/>
            <person name="Kawai J."/>
            <person name="Kamiya A."/>
            <person name="Meyers C."/>
            <person name="Nakajima M."/>
            <person name="Narusaka M."/>
            <person name="Seki M."/>
            <person name="Sakurai T."/>
            <person name="Satou M."/>
            <person name="Tamse R."/>
            <person name="Vaysberg M."/>
            <person name="Wallender E.K."/>
            <person name="Wong C."/>
            <person name="Yamamura Y."/>
            <person name="Yuan S."/>
            <person name="Shinozaki K."/>
            <person name="Davis R.W."/>
            <person name="Theologis A."/>
            <person name="Ecker J.R."/>
        </authorList>
    </citation>
    <scope>NUCLEOTIDE SEQUENCE [LARGE SCALE MRNA]</scope>
    <source>
        <strain>cv. Columbia</strain>
    </source>
</reference>
<reference key="4">
    <citation type="submission" date="1996-09" db="EMBL/GenBank/DDBJ databases">
        <authorList>
            <person name="Tamura T."/>
            <person name="Tamura N."/>
            <person name="Lottspeich F."/>
            <person name="Baumeister W."/>
        </authorList>
    </citation>
    <scope>NUCLEOTIDE SEQUENCE [MRNA] OF 18-380</scope>
    <source>
        <strain>cv. Columbia</strain>
    </source>
</reference>
<feature type="chain" id="PRO_0000080853" description="Proline iminopeptidase">
    <location>
        <begin position="1"/>
        <end position="380"/>
    </location>
</feature>
<feature type="domain" description="AB hydrolase-1" evidence="2">
    <location>
        <begin position="98"/>
        <end position="360"/>
    </location>
</feature>
<feature type="active site" description="Nucleophile" evidence="1">
    <location>
        <position position="172"/>
    </location>
</feature>
<feature type="active site" evidence="1">
    <location>
        <position position="329"/>
    </location>
</feature>
<feature type="active site" description="Proton donor" evidence="1">
    <location>
        <position position="357"/>
    </location>
</feature>
<feature type="sequence conflict" description="In Ref. 4." evidence="3" ref="4">
    <original>L</original>
    <variation>P</variation>
    <location>
        <position position="28"/>
    </location>
</feature>
<feature type="sequence conflict" description="In Ref. 4; AAC49560." evidence="3" ref="4">
    <original>W</original>
    <variation>C</variation>
    <location>
        <position position="344"/>
    </location>
</feature>
<sequence>MNLILASFSLAPCFCVRFFPSNHNNLNLLFPGQRKIQVSCGGKSEVLKSDTMEPHEAETFVNKRTLYAPIEPYSSGNLKVSDVHTLYWEQSGKPDGHPVVFLHGGPGGGTAPSNRRFFDPEFYRIVLFDQRGAGKSTPHACLEENTTWDLVNDIEKLREHLKIPEWLVFGGSWGSTLALAYSQSHPDKVTGLVLRGIFLLRKKEIDWFYEGGAAAIYPDAWEEFRDLIPENERGSSLVDAYHKRLNSDDLEIQYAAARAWTKWEMMTAYLRPNLENVQKAEDDKFSLAFARIENHYFVNKGFFPSDSHLLDNVDKIRHIKTTIVQGRYDVCCPMMSAWDLHKAWPEAELKIVYDAGHSANEPGISAELVVANEKMKALMG</sequence>
<keyword id="KW-0025">Alternative splicing</keyword>
<keyword id="KW-0031">Aminopeptidase</keyword>
<keyword id="KW-0963">Cytoplasm</keyword>
<keyword id="KW-0378">Hydrolase</keyword>
<keyword id="KW-0645">Protease</keyword>
<keyword id="KW-1185">Reference proteome</keyword>
<evidence type="ECO:0000250" key="1"/>
<evidence type="ECO:0000255" key="2"/>
<evidence type="ECO:0000305" key="3"/>
<comment type="function">
    <text evidence="1">Specifically catalyzes the removal of N-terminal proline residues from peptides.</text>
</comment>
<comment type="catalytic activity">
    <reaction>
        <text>Release of N-terminal proline from a peptide.</text>
        <dbReference type="EC" id="3.4.11.5"/>
    </reaction>
</comment>
<comment type="subcellular location">
    <subcellularLocation>
        <location evidence="1">Cytoplasm</location>
    </subcellularLocation>
</comment>
<comment type="alternative products">
    <event type="alternative splicing"/>
    <isoform>
        <id>P93732-1</id>
        <name>1</name>
        <sequence type="displayed"/>
    </isoform>
    <text>A number of isoforms are produced. According to EST sequences.</text>
</comment>
<comment type="similarity">
    <text evidence="3">Belongs to the peptidase S33 family.</text>
</comment>
<comment type="sequence caution" evidence="3">
    <conflict type="erroneous initiation">
        <sequence resource="EMBL-CDS" id="AAC49560"/>
    </conflict>
</comment>